<comment type="function">
    <text evidence="3">Involved in hearing and vision as member of the USH2 complex. In the inner ear, required for the hair bundle ankle formation, which connects growing stereocilia in developing cochlear hair cells. In retina photoreceptors, the USH2 complex is required for the maintenance of periciliary membrane complex that seems to play a role in regulating intracellular protein transport.</text>
</comment>
<comment type="subunit">
    <text evidence="2 3">Interacts with collagen IV and fibronectin via its laminin EGF-like domains. Interaction with collagen may be required for stable integration into the basement membrane. Interacts with NINL (By similarity). Interacts with USH1C. Interacts (via the cytoplasmic region) with PDZD7. Component of USH2 complex, composed of ADGRV1, PDZD7, USH2A and WHRN. Interacts with ADGRV1/MASS1 (via N-terminal PDZ domain). Interacts (via the cytoplasmic region) with WHRN. Interacts (via the cytoplasmic region) with VEZT and MYO7A (via MyTH4-FERM domains); the interaction associates VEZT with the USH2 complex at the stereocilia base (By similarity).</text>
</comment>
<comment type="subcellular location">
    <molecule>Isoform 2</molecule>
    <subcellularLocation>
        <location evidence="1">Secreted</location>
    </subcellularLocation>
</comment>
<comment type="subcellular location">
    <subcellularLocation>
        <location evidence="3">Cell projection</location>
        <location evidence="3">Stereocilium membrane</location>
    </subcellularLocation>
    <subcellularLocation>
        <location evidence="3">Photoreceptor inner segment</location>
    </subcellularLocation>
    <text evidence="3">Component of the interstereocilia ankle links in the inner ear sensory cells. In photoreceptors, localizes at a plasma membrane microdomain in the apical inner segment that surrounds the connecting cilia called periciliary membrane complex.</text>
</comment>
<comment type="alternative products">
    <event type="alternative splicing"/>
    <isoform>
        <id>Q8K3K1-2</id>
        <name>1</name>
        <sequence type="displayed"/>
    </isoform>
    <isoform>
        <id>Q8K3K1-1</id>
        <name>2</name>
        <sequence type="described" ref="VSP_059945"/>
    </isoform>
    <text>A number of isoforms are produced.</text>
</comment>
<comment type="tissue specificity">
    <text evidence="10 11">Present in the synaptic terminals of inner ear hair cells (at protein level). Predominantly expressed in the retina and cochlea. Weakly expressed in brain and kidney. Detectable from E17 in the neural epithelium, but not in the retinal pigment epithelium (RPE) of the developing retina. After birth, it is expressed at P7 and remains expressed during adulthood.</text>
</comment>
<name>USH2A_RAT</name>
<accession>Q8K3K1</accession>
<accession>F1M2F9</accession>
<gene>
    <name type="primary">Ush2a</name>
</gene>
<reference key="1">
    <citation type="journal article" date="2002" name="Genomics">
        <title>Identification of the mouse and rat orthologs of the gene mutated in Usher syndrome type IIA and the cellular source of USH2A mRNA in retina, a target tissue of the disease.</title>
        <authorList>
            <person name="Huang D."/>
            <person name="Eudy J.D."/>
            <person name="Uzvolgyi E."/>
            <person name="Davis J.R."/>
            <person name="Talmadge C.B."/>
            <person name="Pretto D."/>
            <person name="Weston M.D."/>
            <person name="Lehman J.E."/>
            <person name="Zhou M."/>
            <person name="Seemayer T.A."/>
            <person name="Ahmad I."/>
            <person name="Kimberling W.J."/>
            <person name="Sumegi J."/>
        </authorList>
    </citation>
    <scope>NUCLEOTIDE SEQUENCE [MRNA] (ISOFORM 2)</scope>
    <scope>ALTERNATIVE SPLICING</scope>
    <scope>TISSUE SPECIFICITY</scope>
</reference>
<reference key="2">
    <citation type="journal article" date="2004" name="Nature">
        <title>Genome sequence of the Brown Norway rat yields insights into mammalian evolution.</title>
        <authorList>
            <person name="Gibbs R.A."/>
            <person name="Weinstock G.M."/>
            <person name="Metzker M.L."/>
            <person name="Muzny D.M."/>
            <person name="Sodergren E.J."/>
            <person name="Scherer S."/>
            <person name="Scott G."/>
            <person name="Steffen D."/>
            <person name="Worley K.C."/>
            <person name="Burch P.E."/>
            <person name="Okwuonu G."/>
            <person name="Hines S."/>
            <person name="Lewis L."/>
            <person name="Deramo C."/>
            <person name="Delgado O."/>
            <person name="Dugan-Rocha S."/>
            <person name="Miner G."/>
            <person name="Morgan M."/>
            <person name="Hawes A."/>
            <person name="Gill R."/>
            <person name="Holt R.A."/>
            <person name="Adams M.D."/>
            <person name="Amanatides P.G."/>
            <person name="Baden-Tillson H."/>
            <person name="Barnstead M."/>
            <person name="Chin S."/>
            <person name="Evans C.A."/>
            <person name="Ferriera S."/>
            <person name="Fosler C."/>
            <person name="Glodek A."/>
            <person name="Gu Z."/>
            <person name="Jennings D."/>
            <person name="Kraft C.L."/>
            <person name="Nguyen T."/>
            <person name="Pfannkoch C.M."/>
            <person name="Sitter C."/>
            <person name="Sutton G.G."/>
            <person name="Venter J.C."/>
            <person name="Woodage T."/>
            <person name="Smith D."/>
            <person name="Lee H.-M."/>
            <person name="Gustafson E."/>
            <person name="Cahill P."/>
            <person name="Kana A."/>
            <person name="Doucette-Stamm L."/>
            <person name="Weinstock K."/>
            <person name="Fechtel K."/>
            <person name="Weiss R.B."/>
            <person name="Dunn D.M."/>
            <person name="Green E.D."/>
            <person name="Blakesley R.W."/>
            <person name="Bouffard G.G."/>
            <person name="De Jong P.J."/>
            <person name="Osoegawa K."/>
            <person name="Zhu B."/>
            <person name="Marra M."/>
            <person name="Schein J."/>
            <person name="Bosdet I."/>
            <person name="Fjell C."/>
            <person name="Jones S."/>
            <person name="Krzywinski M."/>
            <person name="Mathewson C."/>
            <person name="Siddiqui A."/>
            <person name="Wye N."/>
            <person name="McPherson J."/>
            <person name="Zhao S."/>
            <person name="Fraser C.M."/>
            <person name="Shetty J."/>
            <person name="Shatsman S."/>
            <person name="Geer K."/>
            <person name="Chen Y."/>
            <person name="Abramzon S."/>
            <person name="Nierman W.C."/>
            <person name="Havlak P.H."/>
            <person name="Chen R."/>
            <person name="Durbin K.J."/>
            <person name="Egan A."/>
            <person name="Ren Y."/>
            <person name="Song X.-Z."/>
            <person name="Li B."/>
            <person name="Liu Y."/>
            <person name="Qin X."/>
            <person name="Cawley S."/>
            <person name="Cooney A.J."/>
            <person name="D'Souza L.M."/>
            <person name="Martin K."/>
            <person name="Wu J.Q."/>
            <person name="Gonzalez-Garay M.L."/>
            <person name="Jackson A.R."/>
            <person name="Kalafus K.J."/>
            <person name="McLeod M.P."/>
            <person name="Milosavljevic A."/>
            <person name="Virk D."/>
            <person name="Volkov A."/>
            <person name="Wheeler D.A."/>
            <person name="Zhang Z."/>
            <person name="Bailey J.A."/>
            <person name="Eichler E.E."/>
            <person name="Tuzun E."/>
            <person name="Birney E."/>
            <person name="Mongin E."/>
            <person name="Ureta-Vidal A."/>
            <person name="Woodwark C."/>
            <person name="Zdobnov E."/>
            <person name="Bork P."/>
            <person name="Suyama M."/>
            <person name="Torrents D."/>
            <person name="Alexandersson M."/>
            <person name="Trask B.J."/>
            <person name="Young J.M."/>
            <person name="Huang H."/>
            <person name="Wang H."/>
            <person name="Xing H."/>
            <person name="Daniels S."/>
            <person name="Gietzen D."/>
            <person name="Schmidt J."/>
            <person name="Stevens K."/>
            <person name="Vitt U."/>
            <person name="Wingrove J."/>
            <person name="Camara F."/>
            <person name="Mar Alba M."/>
            <person name="Abril J.F."/>
            <person name="Guigo R."/>
            <person name="Smit A."/>
            <person name="Dubchak I."/>
            <person name="Rubin E.M."/>
            <person name="Couronne O."/>
            <person name="Poliakov A."/>
            <person name="Huebner N."/>
            <person name="Ganten D."/>
            <person name="Goesele C."/>
            <person name="Hummel O."/>
            <person name="Kreitler T."/>
            <person name="Lee Y.-A."/>
            <person name="Monti J."/>
            <person name="Schulz H."/>
            <person name="Zimdahl H."/>
            <person name="Himmelbauer H."/>
            <person name="Lehrach H."/>
            <person name="Jacob H.J."/>
            <person name="Bromberg S."/>
            <person name="Gullings-Handley J."/>
            <person name="Jensen-Seaman M.I."/>
            <person name="Kwitek A.E."/>
            <person name="Lazar J."/>
            <person name="Pasko D."/>
            <person name="Tonellato P.J."/>
            <person name="Twigger S."/>
            <person name="Ponting C.P."/>
            <person name="Duarte J.M."/>
            <person name="Rice S."/>
            <person name="Goodstadt L."/>
            <person name="Beatson S.A."/>
            <person name="Emes R.D."/>
            <person name="Winter E.E."/>
            <person name="Webber C."/>
            <person name="Brandt P."/>
            <person name="Nyakatura G."/>
            <person name="Adetobi M."/>
            <person name="Chiaromonte F."/>
            <person name="Elnitski L."/>
            <person name="Eswara P."/>
            <person name="Hardison R.C."/>
            <person name="Hou M."/>
            <person name="Kolbe D."/>
            <person name="Makova K."/>
            <person name="Miller W."/>
            <person name="Nekrutenko A."/>
            <person name="Riemer C."/>
            <person name="Schwartz S."/>
            <person name="Taylor J."/>
            <person name="Yang S."/>
            <person name="Zhang Y."/>
            <person name="Lindpaintner K."/>
            <person name="Andrews T.D."/>
            <person name="Caccamo M."/>
            <person name="Clamp M."/>
            <person name="Clarke L."/>
            <person name="Curwen V."/>
            <person name="Durbin R.M."/>
            <person name="Eyras E."/>
            <person name="Searle S.M."/>
            <person name="Cooper G.M."/>
            <person name="Batzoglou S."/>
            <person name="Brudno M."/>
            <person name="Sidow A."/>
            <person name="Stone E.A."/>
            <person name="Payseur B.A."/>
            <person name="Bourque G."/>
            <person name="Lopez-Otin C."/>
            <person name="Puente X.S."/>
            <person name="Chakrabarti K."/>
            <person name="Chatterji S."/>
            <person name="Dewey C."/>
            <person name="Pachter L."/>
            <person name="Bray N."/>
            <person name="Yap V.B."/>
            <person name="Caspi A."/>
            <person name="Tesler G."/>
            <person name="Pevzner P.A."/>
            <person name="Haussler D."/>
            <person name="Roskin K.M."/>
            <person name="Baertsch R."/>
            <person name="Clawson H."/>
            <person name="Furey T.S."/>
            <person name="Hinrichs A.S."/>
            <person name="Karolchik D."/>
            <person name="Kent W.J."/>
            <person name="Rosenbloom K.R."/>
            <person name="Trumbower H."/>
            <person name="Weirauch M."/>
            <person name="Cooper D.N."/>
            <person name="Stenson P.D."/>
            <person name="Ma B."/>
            <person name="Brent M."/>
            <person name="Arumugam M."/>
            <person name="Shteynberg D."/>
            <person name="Copley R.R."/>
            <person name="Taylor M.S."/>
            <person name="Riethman H."/>
            <person name="Mudunuri U."/>
            <person name="Peterson J."/>
            <person name="Guyer M."/>
            <person name="Felsenfeld A."/>
            <person name="Old S."/>
            <person name="Mockrin S."/>
            <person name="Collins F.S."/>
        </authorList>
    </citation>
    <scope>NUCLEOTIDE SEQUENCE [LARGE SCALE GENOMIC DNA]</scope>
    <source>
        <strain>Brown Norway</strain>
    </source>
</reference>
<reference key="3">
    <citation type="journal article" date="2005" name="Hum. Mol. Genet.">
        <title>Scaffold protein harmonin (USH1C) provides molecular links between Usher syndrome type 1 and type 2.</title>
        <authorList>
            <person name="Reiners J."/>
            <person name="van Wijk E."/>
            <person name="Maerker T."/>
            <person name="Zimmermann U."/>
            <person name="Juergens K."/>
            <person name="te Brinke H."/>
            <person name="Overlack N."/>
            <person name="Roepman R."/>
            <person name="Knipper M."/>
            <person name="Kremer H."/>
            <person name="Wolfrum U."/>
        </authorList>
    </citation>
    <scope>TISSUE SPECIFICITY</scope>
</reference>
<keyword id="KW-0025">Alternative splicing</keyword>
<keyword id="KW-1003">Cell membrane</keyword>
<keyword id="KW-0966">Cell projection</keyword>
<keyword id="KW-1015">Disulfide bond</keyword>
<keyword id="KW-0325">Glycoprotein</keyword>
<keyword id="KW-1009">Hearing</keyword>
<keyword id="KW-0424">Laminin EGF-like domain</keyword>
<keyword id="KW-0472">Membrane</keyword>
<keyword id="KW-1185">Reference proteome</keyword>
<keyword id="KW-0677">Repeat</keyword>
<keyword id="KW-0964">Secreted</keyword>
<keyword id="KW-0716">Sensory transduction</keyword>
<keyword id="KW-0732">Signal</keyword>
<keyword id="KW-0844">Vision</keyword>
<sequence>MYYLALSSGFLGQAIKTSILAYLASVLLAASQGVFPRLENVGAFKKVSIVPSHATCGYPGPSTFCRSAVAAEHAQLCAERLCIQDCPYRSASPPYTALLEGLRSCIPADHGDLHPYSRSNSTSFIFGSHKNCPSLQAPRLAAEFTLAVWLKPERGSTMCVLEKTADGQIVFKVTISERETMFYYRTVNGLQPPIKVMTPGRILMKKWIHHTVQVHETEVSSFVDGLEENSTAFDTRTLRDSIMDSVPSTVLIGQSLNGSELFVGRMQDFRLYNVSLTNREILELFSGDLPHLHIQSHCRCPGSHPRVHPSVQQYCIPNGVEDTLQHRVSRLNPEAHPLSFINDDDVATSWISHVFTDITQLNQGVAISIDLENGQYQVFQITIRFSSPQPVAMRIQRKKADKSLWEDWQYFARNCSVWGMKNNGDLENPNSVNCLQFPEFIPFSHGNVTFDLLTSGQKHRPGDYDFYNSSLLQEFMTATQIRLYFRGLFYPAWHTVDSRHRYYAVDEITIIGRCQCHGHAETCDRTRRPYRCLCSPHSFTEGPQCGRCSPLYNDKPFRSGNKVHAFNCKPCQCHGHASSCHYDASMDPFPLEYNRGGGGVCDDCQHHTTGRNCESCQDYFYRPIGADPADPEVCKHCDCNRDGTRNGSLLCDLVGDQCDCKRRVSGRRCFRCHIGFYGLQALDPDCCRPCDCNPSGTVDGDITCHHNSGQCSCKANVIGLRCDRCSFGFKFLRSLNADGCEPCHCNLHGSVNQLCDPLSGQCVCKKEAKGLRCDVCRENFYGLPWSACEVCDCNRAGTQAGTVCDAETGQCVCKPSVGGRRCSECKEGYFNLRQNDSHLCLPCNCEKTGTVNGSLLCDKSTGQCPCKLGVTGLRCHQCKPHRFNLTMDNPQGCQACDCDSLGTLLGSMCDPVSGQCLCLPHRQERRCVQCQPGCYSSPSNATGCLPCLCHTVATKNCICNSVTGHCYCPDPSTTGLSWHQCQDRYFRFDPLTGRCRPCHCHVAGASNGTCDAVTGQCFCKEFVTGSKCDTCVPGASHLDVNNLLACSKTPSQQPPPRGRVQSSSAINLSWSPPDFPNAHWLTYTLFRDDSEIYTTDDQHPYYTQYFLDTSLSPHTAYSYYIETSNVHSSTRSIPVIYKTKPEGSEGHLNLTHIIPVASDSITLVWTGLSNHSGPIEKYVLSCTPVDHTEPCVSYEGPETSATIRNLVPFTQYCFSVQGCTNGSCLYSSPITVTTAQAPPQRQEPPTVWKISPTELKVEWSRPVDSNGVIIRYELYMKRWPSTEESLVFESHGWFHSHPASPSANQSENVLQDPQVSTVLSGLDPHTEYAFRVLAVNMAGSVSSAWASERTGESAPVFMAAPSVSPLSPYSLSVSWEKPAENFTRGEIIGYKISMVSERSPQRDVPVMCSKLVHFAESQDQSYIVQRLKPYRTYSFTVSLCASVGCVTSALGEGQTLAAAPAQLRSPMVTGVTSTTVHIRWLPPAEVNGPPPLYRLERRESFLPAATAARTKGTRFMGDGYCRFPRTAHPDFIGIKASFWTRVPEGLILLALHPDNQEEYFALQLKSGRPYFLYNPQGSLVEVTTADDHSQQYSDGQWHEITAIRHQSFGQITLDEQYTDSSASLNGSSVTGGYTRLFVGGLPQGHTILQKRPVRRGFVGCLKDVSILKGSSPSGTWLPLDWQSSEEQVNVHHSWEGCPTDLEEGVQFLGAGFLELRSDTFHAAKDFEISLKFQTDQLNGLLLFIHNTEGLDFLAMELKSGLLSFQLNSSRILTRVEVRLGRTHCDGKWNRVTIRREGSMVSVGVNELTKSTSRAGDQPPLLTSPVYLGGIPQELQASYRHLTLEQGFRGCVKEVAFTRGAVVNLASVSSRAVRVNQDGCLSSDSTVNCGGNDSILVYRGSRQSVYESGLQPFTEYLYRVTASHKGGSVSSDWSRGRTLGSAPHSVPTPSRAQSINGYSVEVAWNEPAMVKGVLEKYILKAYSEDSAQPHMPSASTEFNNTDIRTGILTGLHPFHSYAVTLTACSRAGCTESSRALSISTPQEAPQEVQAPVAEALPNSLSFFWSPPRQANGIITQYSLYMDGRLVYTGKGQNYTVTDLRVFTAYEITVGACTRAGCTNSSRVILHTAQLPPERVDPPVLAILDSRTVHIQWKQPRQLNGILERYILYTLNPTHNSTVWDVVYNSTENLQTHLLYHLSPGCLYLIKLGACTGGGCTTSEPSQALMDETVPEGVPAPRAHSHSPDSFNISWTEPGHPNGVITTYELYLDGTLIHNSSELSCHAYGFDPGSLHTFQVQACTAKGCALGPLVENRTLEAPPEGTVNLFVKPEGSREAAVRWDAPPHPNGRLTYSVLITGNFYADQAGDNYTLLSSTKTVHSSKGDRLWVLVDRLVPCSNYTVQVNASNSQGSVLSDRVSVEMPPGAPDGLLSPRLAAATPTSLQVVWSTPARNNAPGSPRYQLQMRPDPSTRGLLELFPIPSALLSYEVTGLQPFTVYEFRLVATNGFGSAYSDWTPLMTTEDKPGPMDAPVLNVKAGMMSVAWRKPTECNGAITHYNIYQHGRLYLTVSGGVTNCTVVHLRPHTAYQFQIEACSSKGCSMSPASETVWTLPGTPEGIPGPELLPYTPTKIIVSWQPPTHLDGLVENITIERRVKEQEEVRSLVILPRSQAVRFIDNDPALRPWTHYEYRVLGSTLNGGTNSSAWVEVTTRPSRPSGVQPPTVHVLGPDAVEVTWKAPLIRNGDIVSYEIRMPDPLIEITNVTSFVLSHLVKHLIPFTNYSVSIVACSGGHGYLGGCTESLPTFATTHPALPQELTPLSISLLGQSYVGISWQPPSKPNGPNLRYELLRRKIQQPLASNPPEDLNLWHNIYSGTRRFYEDKGLSRFTTYEYKLFVHNSLGFTPSQEVTVTTLAGSPERGATVTASILNHTAIDVRWKRPTFQDLQGDVEYYTLFWSSGTSVESLKIFPDVDFHVIGHLAPNVEYQVFLLVFNGVHAINSTVVRVTTWEEEPRGMRPPEVVIINSTAVRVIWTSPSNPNAVITESSVYANNELHKAGAGAPGSFTLEDLSPFTIYDIQVEVCTKDACVKSSGTQVSTAEDTPSGISIPIIRDITSRSLQIDWTAPGNPNGIILGYDVLRKTWRLCSETQKLTDKPRDELCKAVKCQYPGNVCGHTCYSPGTKVCCDGLLYDPQPGYSCCEEKYIALLPNSTGVCCGGRQREAQPDHQCCSGHYIRILPGEICCPDERHNRVSVGFGDACCGTMPYATSGSQVCCAGKLQDGYRRQCCGGEMVSQDFKCCGGGEEGMVYSSLPGMLCCGQDYVNMSDTICCSASSGDSKAHVRGSDPMPVRCCHTELIPESQQCCDGVGYNPVKYVCSDEISAGMATEETRVCATVCPATMRATAHCGQCDFNATTHICTVSRGPLNPIGKETAEGLCSTAEEIVHSGDENTRSFIDTDLEPSTVYEYRVSVWNSYGRGFSQSVRASTREDVPQGVTAPRWARTGNHEDVIFLTWKEPTQSNGPITHYILLRDGRERFQGAALSFTDTQGIQPLQEYSYQLKACTAAGCADSCKVVATATRGVLESVPPPNITAQSPETLHLSWSVPEKRNDAIKEYQLWLDGKGLIYTDTNDRRQHTVTGLQPHTNYSFTLSACTSVGCTSSEPSVGQTLQAAPQGVWVTPRHIIINSTTVELYWNPPERPNGVISQYRLRRNGSLLLVGGRDDQSFTDKNLEPNSRYIYTLEARTGGGSSLSEEYLVQMPMWTPEDVHPPCNVTVLGSDSIFVAWPAPGILLPKIPVEYSILLSGGNMMLLTFSVGLRQSAYLKNLAPFTQYEIRIQACQEGCGVSPGTHVRTLEAAPVGLMPPLLKALGSHCIEVKWTPPTRPNGIITSYVIHRRPADTEEESLLFVWSEGALEFTDDTDTLRPFTLYEYRVRAWNSKGVVDSPWSSVQTLEAPPQDLPAPWVQVTSAHSVLLNWTEPEAPNGLISQYHVIYQERPDEAAPGSSTVHAFTVKGSSRQAHLFGLEPFTTYHIGVAAVNRAGKVSSPWTLIKTLESAPSGLMNFTAEQREGGRALLLQWSEPVRTNGVIKAYNVFSDGLPEYSGLGRQFLFRRLAPFTLYILTLEACTAAGCAHSVPQTLWTEEAPPDSQMAPTIQSVEPTSVRLHWSQPANPNGKIIRYEVIRRRLQGEDWGNRTVQADENTVFTEYNTEGNGWVCTDTGLQPWGLYSYRICTWNSAGHTCSSWSVVRTSQAPPDGLSPPEVSYVSTSPLQLLISWFAPRHTNGVIQSYRLQRNGVFAAASFNSSTFSYTDGQLLPFTTYSYAVLACTGGGCCTSEPTNITTPEASPAGVSPPVLWAIGAHQINVSWSPPSVPNGKIAKYLLHCDGEEHLAGQDLSLLLSNLRPFTQYNVSLVACTKGGCTASRVASAWTMEAPPEDMDPPTLHVMGPESIEITWAPPRNPHGQIRSYELRRDGAIVYIGLETRYHDFILTPGVQYGYTVTATNSRGSVLSPLVKGQTSPSAPSGLQPPKLRAGEALELLVNWNPPVRTNGKITNYTLFIRELLEGEIRTMCINTTHSSFGTRSLAVKHLKPFHRYEVRVQACTALGCTSSEWTPTQTSEIPPLLQPAPHLEVQTAAGGFQPIVAVWWAGPLQPHGKIVRFELYRRQTASWPGTSSPLLIYNGSLSSFTDRELLPFTEYEYQVWAVNSAGKVASNWTWCRTGPAPPEGLKAPTFHTVSSTQAVVNISAPSKPNGNISLFRVFSNSSGTHVMLSEGMATQQTLHDLRPFTTYAIGVEACTCFNCCSRGPTAELRTHPAPPSGLSPPQVQTLGSRMASFQWAPPQLPNGVIHSYELQLHRACPPDSAPHCPPSPTERKYWGPGHRASLAGLQPNTAYGVQVVAHNEAGSTASGWTSFRTKKEMPQYQALFSVDSNASTVWVDWSGTFVLNGQLKEYVVTDGGRRVYSGLDTTLYIPRTVDKTFFFQVTCTTDIGSVKTPLVQYDATTGFGLVLTTPGGKKGAGTKSTEFYTDTRLPRSGTPVSIRSSQSVSVLRIPSQSQLSHAYSQGSLHRSVSQLMDSPDKKALTEDSLWETIMGHSSGLCVDEEELMNAIKGFSSVTKEHTAFTDTHL</sequence>
<feature type="signal peptide" evidence="4">
    <location>
        <begin position="1"/>
        <end position="33"/>
    </location>
</feature>
<feature type="chain" id="PRO_0000229806" description="Usherin">
    <location>
        <begin position="34"/>
        <end position="5125"/>
    </location>
</feature>
<feature type="domain" description="Laminin N-terminal" evidence="8">
    <location>
        <begin position="273"/>
        <end position="513"/>
    </location>
</feature>
<feature type="domain" description="Laminin EGF-like 1" evidence="7">
    <location>
        <begin position="514"/>
        <end position="570"/>
    </location>
</feature>
<feature type="domain" description="Laminin EGF-like 2" evidence="7">
    <location>
        <begin position="571"/>
        <end position="636"/>
    </location>
</feature>
<feature type="domain" description="Laminin EGF-like 3" evidence="7">
    <location>
        <begin position="637"/>
        <end position="689"/>
    </location>
</feature>
<feature type="domain" description="Laminin EGF-like 4" evidence="7">
    <location>
        <begin position="690"/>
        <end position="742"/>
    </location>
</feature>
<feature type="domain" description="Laminin EGF-like 5" evidence="7">
    <location>
        <begin position="743"/>
        <end position="790"/>
    </location>
</feature>
<feature type="domain" description="Laminin EGF-like 6" evidence="7">
    <location>
        <begin position="791"/>
        <end position="842"/>
    </location>
</feature>
<feature type="domain" description="Laminin EGF-like 7" evidence="7">
    <location>
        <begin position="843"/>
        <end position="895"/>
    </location>
</feature>
<feature type="domain" description="Laminin EGF-like 8" evidence="7">
    <location>
        <begin position="896"/>
        <end position="946"/>
    </location>
</feature>
<feature type="domain" description="Laminin EGF-like 9" evidence="7">
    <location>
        <begin position="947"/>
        <end position="997"/>
    </location>
</feature>
<feature type="domain" description="Laminin EGF-like 10" evidence="7">
    <location>
        <begin position="998"/>
        <end position="1048"/>
    </location>
</feature>
<feature type="domain" description="Fibronectin type-III 1" evidence="6">
    <location>
        <begin position="1054"/>
        <end position="1142"/>
    </location>
</feature>
<feature type="domain" description="Fibronectin type-III 2" evidence="6">
    <location>
        <begin position="1146"/>
        <end position="1240"/>
    </location>
</feature>
<feature type="domain" description="Fibronectin type-III 3" evidence="6">
    <location>
        <begin position="1241"/>
        <end position="1356"/>
    </location>
</feature>
<feature type="domain" description="Fibronectin type-III 4" evidence="6">
    <location>
        <begin position="1357"/>
        <end position="1461"/>
    </location>
</feature>
<feature type="domain" description="Laminin G-like 1" evidence="5">
    <location>
        <begin position="1510"/>
        <end position="1697"/>
    </location>
</feature>
<feature type="domain" description="Laminin G-like 2" evidence="5">
    <location>
        <begin position="1702"/>
        <end position="1879"/>
    </location>
</feature>
<feature type="domain" description="Fibronectin type-III 5" evidence="6">
    <location>
        <begin position="1857"/>
        <end position="1943"/>
    </location>
</feature>
<feature type="domain" description="Fibronectin type-III 6" evidence="6">
    <location>
        <begin position="1945"/>
        <end position="2042"/>
    </location>
</feature>
<feature type="domain" description="Fibronectin type-III 7" evidence="6">
    <location>
        <begin position="2043"/>
        <end position="2132"/>
    </location>
</feature>
<feature type="domain" description="Fibronectin type-III 8" evidence="6">
    <location>
        <begin position="2133"/>
        <end position="2230"/>
    </location>
</feature>
<feature type="domain" description="Fibronectin type-III 9" evidence="6">
    <location>
        <begin position="2231"/>
        <end position="2318"/>
    </location>
</feature>
<feature type="domain" description="Fibronectin type-III 10" evidence="6">
    <location>
        <begin position="2319"/>
        <end position="2421"/>
    </location>
</feature>
<feature type="domain" description="Fibronectin type-III 11" evidence="6">
    <location>
        <begin position="2425"/>
        <end position="2519"/>
    </location>
</feature>
<feature type="domain" description="Fibronectin type-III 12" evidence="6">
    <location>
        <begin position="2520"/>
        <end position="2613"/>
    </location>
</feature>
<feature type="domain" description="Fibronectin type-III 13" evidence="6">
    <location>
        <begin position="2614"/>
        <end position="2709"/>
    </location>
</feature>
<feature type="domain" description="Fibronectin type-III 14" evidence="6">
    <location>
        <begin position="2713"/>
        <end position="2806"/>
    </location>
</feature>
<feature type="domain" description="Fibronectin type-III 15" evidence="6">
    <location>
        <begin position="2807"/>
        <end position="2910"/>
    </location>
</feature>
<feature type="domain" description="Fibronectin type-III 16" evidence="6">
    <location>
        <begin position="2914"/>
        <end position="3005"/>
    </location>
</feature>
<feature type="domain" description="Fibronectin type-III 17" evidence="6">
    <location>
        <begin position="3009"/>
        <end position="3099"/>
    </location>
</feature>
<feature type="domain" description="Fibronectin type-III 18" evidence="6">
    <location>
        <begin position="3380"/>
        <end position="3485"/>
    </location>
</feature>
<feature type="domain" description="Fibronectin type-III 19" evidence="6">
    <location>
        <begin position="3486"/>
        <end position="3577"/>
    </location>
</feature>
<feature type="domain" description="Fibronectin type-III 20" evidence="6">
    <location>
        <begin position="3580"/>
        <end position="3670"/>
    </location>
</feature>
<feature type="domain" description="Fibronectin type-III 21" evidence="6">
    <location>
        <begin position="3672"/>
        <end position="3762"/>
    </location>
</feature>
<feature type="domain" description="Fibronectin type-III 22" evidence="6">
    <location>
        <begin position="3765"/>
        <end position="3852"/>
    </location>
</feature>
<feature type="domain" description="Fibronectin type-III 23" evidence="6">
    <location>
        <begin position="3853"/>
        <end position="3950"/>
    </location>
</feature>
<feature type="domain" description="Fibronectin type-III 24" evidence="6">
    <location>
        <begin position="3951"/>
        <end position="4054"/>
    </location>
</feature>
<feature type="domain" description="Fibronectin type-III 25" evidence="6">
    <location>
        <begin position="4055"/>
        <end position="4143"/>
    </location>
</feature>
<feature type="domain" description="Fibronectin type-III 26" evidence="6">
    <location>
        <begin position="4144"/>
        <end position="4251"/>
    </location>
</feature>
<feature type="domain" description="Fibronectin type-III 27" evidence="6">
    <location>
        <begin position="4252"/>
        <end position="4344"/>
    </location>
</feature>
<feature type="domain" description="Fibronectin type-III 28" evidence="6">
    <location>
        <begin position="4345"/>
        <end position="4432"/>
    </location>
</feature>
<feature type="domain" description="Fibronectin type-III 29" evidence="6">
    <location>
        <begin position="4433"/>
        <end position="4517"/>
    </location>
</feature>
<feature type="domain" description="Fibronectin type-III 30" evidence="6">
    <location>
        <begin position="4518"/>
        <end position="4620"/>
    </location>
</feature>
<feature type="domain" description="Fibronectin type-III 31" evidence="6">
    <location>
        <begin position="4625"/>
        <end position="4720"/>
    </location>
</feature>
<feature type="domain" description="Fibronectin type-III 32" evidence="6">
    <location>
        <begin position="4721"/>
        <end position="4813"/>
    </location>
</feature>
<feature type="domain" description="Fibronectin type-III 33" evidence="6">
    <location>
        <begin position="4814"/>
        <end position="4916"/>
    </location>
</feature>
<feature type="region of interest" description="Disordered" evidence="9">
    <location>
        <begin position="1930"/>
        <end position="1950"/>
    </location>
</feature>
<feature type="glycosylation site" description="N-linked (GlcNAc...) asparagine" evidence="4">
    <location>
        <position position="120"/>
    </location>
</feature>
<feature type="glycosylation site" description="N-linked (GlcNAc...) asparagine" evidence="4">
    <location>
        <position position="229"/>
    </location>
</feature>
<feature type="glycosylation site" description="N-linked (GlcNAc...) asparagine" evidence="4">
    <location>
        <position position="257"/>
    </location>
</feature>
<feature type="glycosylation site" description="N-linked (GlcNAc...) asparagine" evidence="4">
    <location>
        <position position="273"/>
    </location>
</feature>
<feature type="glycosylation site" description="N-linked (GlcNAc...) asparagine" evidence="4">
    <location>
        <position position="414"/>
    </location>
</feature>
<feature type="glycosylation site" description="N-linked (GlcNAc...) asparagine" evidence="4">
    <location>
        <position position="447"/>
    </location>
</feature>
<feature type="glycosylation site" description="N-linked (GlcNAc...) asparagine" evidence="4">
    <location>
        <position position="468"/>
    </location>
</feature>
<feature type="glycosylation site" description="N-linked (GlcNAc...) asparagine" evidence="4">
    <location>
        <position position="646"/>
    </location>
</feature>
<feature type="glycosylation site" description="N-linked (GlcNAc...) asparagine" evidence="4">
    <location>
        <position position="835"/>
    </location>
</feature>
<feature type="glycosylation site" description="N-linked (GlcNAc...) asparagine" evidence="4">
    <location>
        <position position="852"/>
    </location>
</feature>
<feature type="glycosylation site" description="N-linked (GlcNAc...) asparagine" evidence="4">
    <location>
        <position position="884"/>
    </location>
</feature>
<feature type="glycosylation site" description="N-linked (GlcNAc...) asparagine" evidence="4">
    <location>
        <position position="940"/>
    </location>
</feature>
<feature type="glycosylation site" description="N-linked (GlcNAc...) asparagine" evidence="4">
    <location>
        <position position="1007"/>
    </location>
</feature>
<feature type="glycosylation site" description="N-linked (GlcNAc...) asparagine" evidence="4">
    <location>
        <position position="1067"/>
    </location>
</feature>
<feature type="glycosylation site" description="N-linked (GlcNAc...) asparagine" evidence="4">
    <location>
        <position position="1149"/>
    </location>
</feature>
<feature type="glycosylation site" description="N-linked (GlcNAc...) asparagine" evidence="4">
    <location>
        <position position="1170"/>
    </location>
</feature>
<feature type="glycosylation site" description="N-linked (GlcNAc...) asparagine" evidence="4">
    <location>
        <position position="1221"/>
    </location>
</feature>
<feature type="glycosylation site" description="N-linked (GlcNAc...) asparagine" evidence="4">
    <location>
        <position position="1304"/>
    </location>
</feature>
<feature type="glycosylation site" description="N-linked (GlcNAc...) asparagine" evidence="4">
    <location>
        <position position="1381"/>
    </location>
</feature>
<feature type="disulfide bond" evidence="7">
    <location>
        <begin position="514"/>
        <end position="523"/>
    </location>
</feature>
<feature type="disulfide bond" evidence="7">
    <location>
        <begin position="516"/>
        <end position="532"/>
    </location>
</feature>
<feature type="disulfide bond" evidence="7">
    <location>
        <begin position="534"/>
        <end position="545"/>
    </location>
</feature>
<feature type="disulfide bond" evidence="7">
    <location>
        <begin position="548"/>
        <end position="568"/>
    </location>
</feature>
<feature type="disulfide bond" evidence="7">
    <location>
        <begin position="571"/>
        <end position="580"/>
    </location>
</feature>
<feature type="disulfide bond" evidence="7">
    <location>
        <begin position="573"/>
        <end position="601"/>
    </location>
</feature>
<feature type="disulfide bond" evidence="7">
    <location>
        <begin position="604"/>
        <end position="613"/>
    </location>
</feature>
<feature type="disulfide bond" evidence="7">
    <location>
        <begin position="616"/>
        <end position="634"/>
    </location>
</feature>
<feature type="disulfide bond" evidence="7">
    <location>
        <begin position="637"/>
        <end position="651"/>
    </location>
</feature>
<feature type="disulfide bond" evidence="7">
    <location>
        <begin position="639"/>
        <end position="658"/>
    </location>
</feature>
<feature type="disulfide bond" evidence="7">
    <location>
        <begin position="660"/>
        <end position="669"/>
    </location>
</feature>
<feature type="disulfide bond" evidence="7">
    <location>
        <begin position="672"/>
        <end position="687"/>
    </location>
</feature>
<feature type="disulfide bond" evidence="7">
    <location>
        <begin position="690"/>
        <end position="704"/>
    </location>
</feature>
<feature type="disulfide bond" evidence="7">
    <location>
        <begin position="692"/>
        <end position="711"/>
    </location>
</feature>
<feature type="disulfide bond" evidence="7">
    <location>
        <begin position="713"/>
        <end position="722"/>
    </location>
</feature>
<feature type="disulfide bond" evidence="7">
    <location>
        <begin position="725"/>
        <end position="740"/>
    </location>
</feature>
<feature type="disulfide bond" evidence="7">
    <location>
        <begin position="743"/>
        <end position="755"/>
    </location>
</feature>
<feature type="disulfide bond" evidence="7">
    <location>
        <begin position="745"/>
        <end position="762"/>
    </location>
</feature>
<feature type="disulfide bond" evidence="7">
    <location>
        <begin position="764"/>
        <end position="773"/>
    </location>
</feature>
<feature type="disulfide bond" evidence="7">
    <location>
        <begin position="776"/>
        <end position="788"/>
    </location>
</feature>
<feature type="disulfide bond" evidence="7">
    <location>
        <begin position="791"/>
        <end position="804"/>
    </location>
</feature>
<feature type="disulfide bond" evidence="7">
    <location>
        <begin position="793"/>
        <end position="811"/>
    </location>
</feature>
<feature type="disulfide bond" evidence="7">
    <location>
        <begin position="813"/>
        <end position="822"/>
    </location>
</feature>
<feature type="disulfide bond" evidence="7">
    <location>
        <begin position="825"/>
        <end position="840"/>
    </location>
</feature>
<feature type="disulfide bond" evidence="7">
    <location>
        <begin position="843"/>
        <end position="857"/>
    </location>
</feature>
<feature type="disulfide bond" evidence="7">
    <location>
        <begin position="845"/>
        <end position="864"/>
    </location>
</feature>
<feature type="disulfide bond" evidence="7">
    <location>
        <begin position="866"/>
        <end position="875"/>
    </location>
</feature>
<feature type="disulfide bond" evidence="7">
    <location>
        <begin position="878"/>
        <end position="893"/>
    </location>
</feature>
<feature type="disulfide bond" evidence="7">
    <location>
        <begin position="896"/>
        <end position="909"/>
    </location>
</feature>
<feature type="disulfide bond" evidence="7">
    <location>
        <begin position="898"/>
        <end position="916"/>
    </location>
</feature>
<feature type="disulfide bond" evidence="7">
    <location>
        <begin position="918"/>
        <end position="927"/>
    </location>
</feature>
<feature type="disulfide bond" evidence="7">
    <location>
        <begin position="930"/>
        <end position="944"/>
    </location>
</feature>
<feature type="disulfide bond" evidence="7">
    <location>
        <begin position="947"/>
        <end position="959"/>
    </location>
</feature>
<feature type="disulfide bond" evidence="7">
    <location>
        <begin position="949"/>
        <end position="966"/>
    </location>
</feature>
<feature type="disulfide bond" evidence="7">
    <location>
        <begin position="981"/>
        <end position="995"/>
    </location>
</feature>
<feature type="disulfide bond" evidence="7">
    <location>
        <begin position="998"/>
        <end position="1010"/>
    </location>
</feature>
<feature type="disulfide bond" evidence="7">
    <location>
        <begin position="1000"/>
        <end position="1017"/>
    </location>
</feature>
<feature type="disulfide bond" evidence="7">
    <location>
        <begin position="1019"/>
        <end position="1028"/>
    </location>
</feature>
<feature type="disulfide bond" evidence="7">
    <location>
        <begin position="1031"/>
        <end position="1046"/>
    </location>
</feature>
<feature type="disulfide bond" evidence="5">
    <location>
        <begin position="1660"/>
        <end position="1697"/>
    </location>
</feature>
<feature type="disulfide bond" evidence="5">
    <location>
        <begin position="1850"/>
        <end position="1879"/>
    </location>
</feature>
<feature type="splice variant" id="VSP_059945" description="In isoform 2.">
    <original>AAAPAQLRSPMVTGVTSTTVHIRWLPPAEVNGPPPLYRLERRESFLPAATAARTKGTRFMGDGYCRFPRTAHPDFIGIKASFWTRVPEGLILLALHPDNQEEYFALQLKSGRPYFLYNPQGSLVEVTTADDHSQQYSDGQWHEITAIRHQSFGQITLDEQYTDSSASLNGSSVTGGYTRLFVGGLPQGHTILQKRPVRRGFVGCLKDVSILKGSSPSGTWLPLDWQSSEEQVNVHHSWEGCPTDLEEGVQFLGAGFLELRSDTFHAAKDFEISLKFQTDQLNGLLLFIHNTEGLDFLAMELKSGLLSFQLNSSRILTRVEVRLGRTHCDGKWNRVTIRREGSMVSVGVNELTKSTSRAGDQPPLLTSPVYLGGIPQELQASYRHLTLEQGFRGCVKEVAFTRGAVVNLASVSSRAVRVNQDGCLSSDSTVNCGGNDSILVYRGSRQSVYESGLQPFTEYLYRVTASHKGGSVSSDWSRGRTLGSAPHSVPTPSRAQSINGYSVEVAWNEPAMVKGVLEKYILKAYSEDSAQPHMPSASTEFNNTDIRTGILTGLHPFHSYAVTLTACSRAGCTESSRALSISTPQEAPQEVQAPVAEALPNSLSFFWSPPRQANGIITQYSLYMDGRLVYTGKGQNYTVTDLRVFTAYEITVGACTRAGCTNSSRVILHTAQLPPERVDPPVLAILDSRTVHIQWKQPRQLNGILERYILYTLNPTHNSTVWDVVYNSTENLQTHLLYHLSPGCLYLIKLGACTGGGCTTSEPSQALMDETVPEGVPAPRAHSHSPDSFNISWTEPGHPNGVITTYELYLDGTLIHNSSELSCHAYGFDPGSLHTFQVQACTAKGCALGPLVENRTLEAPPEGTVNLFVKPEGSREAAVRWDAPPHPNGRLTYSVLITGNFYADQAGDNYTLLSSTKTVHSSKGDRLWVLVDRLVPCSNYTVQVNASNSQGSVLSDRVSVEMPPGAPDGLLSPRLAAATPTSLQVVWSTPARNNAPGSPRYQLQMRPDPSTRGLLELFPIPSALLSYEVTGLQPFTVYEFRLVATNGFGSAYSDWTPLMTTEDKPGPMDAPVLNVKAGMMSVAWRKPTECNGAITHYNIYQHGRLYLTVSGGVTNCTVVHLRPHTAYQFQIEACSSKGCSMSPASETVWTLPGTPEGIPGPELLPYTPTKIIVSWQPPTHLDGLVENITIERRVKEQEEVRSLVILPRSQAVRFIDNDPALRPWTHYEYRVLGSTLNGGTNSSAWVEVTTRPSRPSGVQPPTVHVLGPDAVEVTWKAPLIRNGDIVSYEIRMPDPLIEITNVTSFVLSHLVKHLIPFTNYSVSIVACSGGHGYLGGCTESLPTFATTHPALPQELTPLSISLLGQSYVGISWQPPSKPNGPNLRYELLRRKIQQPLASNPPEDLNLWHNIYSGTRRFYEDKGLSRFTTYEYKLFVHNSLGFTPSQEVTVTTLAGSPERGATVTASILNHTAIDVRWKRPTFQDLQGDVEYYTLFWSSGTSVESLKIFPDVDFHVIGHLAPNVEYQVFLLVFNGVHAINSTVVRVTTWEEEPRGMRPPEVVIINSTAVRVIWTSPSNPNAVITESSVYANNELHKAGAGAPGSFTLEDLSPFTIYDIQVEVCTKDACVKSSGTQVSTAEDTPSGISIPIIRDITSRSLQIDWTAPGNPNGIILGYDVLRKTWRLCSETQKLTDKPRDELCKAVKCQYPGNVCGHTCYSPGTKVCCDGLLYDPQPGYSCCEEKYIALLPNSTGVCCGGRQREAQPDHQCCSGHYIRILPGEICCPDERHNRVSVGFGDACCGTMPYATSGSQVCCAGKLQDGYRRQCCGGEMVSQDFKCCGGGEEGMVYSSLPGMLCCGQDYVNMSDTICCSASSGDSKAHVRGSDPMPVRCCHTELIPESQQCCDGVGYNPVKYVCSDEISAGMATEETRVCATVCPATMRATAHCGQCDFNATTHICTVSRGPLNPIGKETAEGLCSTAEEIVHSGDENTRSFIDTDLEPSTVYEYRVSVWNSYGRGFSQSVRASTREDVPQGVTAPRWARTGNHEDVIFLTWKEPTQSNGPITHYILLRDGRERFQGAALSFTDTQGIQPLQEYSYQLKACTAAGCADSCKVVATATRGVLESVPPPNITAQSPETLHLSWSVPEKRNDAIKEYQLWLDGKGLIYTDTNDRRQHTVTGLQPHTNYSFTLSACTSVGCTSSEPSVGQTLQAAPQGVWVTPRHIIINSTTVELYWNPPERPNGVISQYRLRRNGSLLLVGGRDDQSFTDKNLEPNSRYIYTLEARTGGGSSLSEEYLVQMPMWTPEDVHPPCNVTVLGSDSIFVAWPAPGILLPKIPVEYSILLSGGNMMLLTFSVGLRQSAYLKNLAPFTQYEIRIQACQEGCGVSPGTHVRTLEAAPVGLMPPLLKALGSHCIEVKWTPPTRPNGIITSYVIHRRPADTEEESLLFVWSEGALEFTDDTDTLRPFTLYEYRVRAWNSKGVVDSPWSSVQTLEAPPQDLPAPWVQVTSAHSVLLNWTEPEAPNGLISQYHVIYQERPDEAAPGSSTVHAFTVKGSSRQAHLFGLEPFTTYHIGVAAVNRAGKVSSPWTLIKTLESAPSGLMNFTAEQREGGRALLLQWSEPVRTNGVIKAYNVFSDGLPEYSGLGRQFLFRRLAPFTLYILTLEACTAAGCAHSVPQTLWTEEAPPDSQMAPTIQSVEPTSVRLHWSQPANPNGKIIRYEVIRRRLQGEDWGNRTVQADENTVFTEYNTEGNGWVCTDTGLQPWGLYSYRICTWNSAGHTCSSWSVVRTSQAPPDGLSPPEVSYVSTSPLQLLISWFAPRHTNGVIQSYRLQRNGVFAAASFNSSTFSYTDGQLLPFTTYSYAVLACTGGGCCTSEPTNITTPEASPAGVSPPVLWAIGAHQINVSWSPPSVPNGKIAKYLLHCDGEEHLAGQDLSLLLSNLRPFTQYNVSLVACTKGGCTASRVASAWTMEAPPEDMDPPTLHVMGPESIEITWAPPRNPHGQIRSYELRRDGAIVYIGLETRYHDFILTPGVQYGYTVTATNSRGSVLSPLVKGQTSPSAPSGLQPPKLRAGEALELLVNWNPPVRTNGKITNYTLFIRELLEGEIRTMCINTTHSSFGTRSLAVKHLKPFHRYEVRVQACTALGCTSSEWTPTQTSEIPPLLQPAPHLEVQTAAGGFQPIVAVWWAGPLQPHGKIVRFELYRRQTASWPGTSSPLLIYNGSLSSFTDRELLPFTEYEYQVWAVNSAGKVASNWTWCRTGPAPPEGLKAPTFHTVSSTQAVVNISAPSKPNGNISLFRVFSNSSGTHVMLSEGMATQQTLHDLRPFTTYAIGVEACTCFNCCSRGPTAELRTHPAPPSGLSPPQVQTLGSRMASFQWAPPQLPNGVIHSYELQLHRACPPDSAPHCPPSPTERKYWGPGHRASLAGLQPNTAYGVQVVAHNEAGSTASGWTSFRTKKEMPQYQALFSVDSNASTVWVDWSGTFVLNGQLKEYVVTDGGRRVYSGLDTTLYIPRTVDKTFFFQVTCTTDIGSVKTPLVQYDATTGFGLVLTTPGGKKGAGTKSTEFYTDTRLPRSGTPVSIRSSQSVSVLRIPSQSQLSHAYSQGSLHRSVSQLMDSPDKKALTEDSLWETIMGHSSGLCVDEEELMNAIKGFSSVTKEHTAFTDTHL</original>
    <variation>TAGKNVLTNTKKCTHVGNQYYRSAVLWASYMSSLFTAPSSDILDVVYLESFKQNQH</variation>
    <location>
        <begin position="1457"/>
        <end position="5125"/>
    </location>
</feature>
<feature type="sequence conflict" description="In Ref. 1; AAL78289." evidence="12" ref="1">
    <original>S</original>
    <variation>T</variation>
    <location>
        <position position="52"/>
    </location>
</feature>
<feature type="sequence conflict" description="In Ref. 1; AAL78289." evidence="12" ref="1">
    <original>HT</original>
    <variation>LS</variation>
    <location>
        <begin position="210"/>
        <end position="211"/>
    </location>
</feature>
<feature type="sequence conflict" description="In Ref. 1; AAL78289." evidence="12" ref="1">
    <original>S</original>
    <variation>F</variation>
    <location>
        <position position="221"/>
    </location>
</feature>
<feature type="sequence conflict" description="In Ref. 1; AAL78289." evidence="12" ref="1">
    <original>MDSV</original>
    <variation>TDSA</variation>
    <location>
        <begin position="243"/>
        <end position="246"/>
    </location>
</feature>
<feature type="sequence conflict" description="In Ref. 1; AAL78289." evidence="12" ref="1">
    <original>E</original>
    <variation>D</variation>
    <location>
        <position position="439"/>
    </location>
</feature>
<feature type="sequence conflict" description="In Ref. 1; AAL78289." evidence="12" ref="1">
    <original>R</original>
    <variation>Q</variation>
    <location>
        <position position="531"/>
    </location>
</feature>
<feature type="sequence conflict" description="In Ref. 1; AAL78289." evidence="12" ref="1">
    <original>D</original>
    <variation>G</variation>
    <location>
        <position position="656"/>
    </location>
</feature>
<feature type="sequence conflict" description="In Ref. 1; AAL78289." evidence="12" ref="1">
    <original>C</original>
    <variation>G</variation>
    <location>
        <position position="686"/>
    </location>
</feature>
<feature type="sequence conflict" description="In Ref. 1; AAL78289." evidence="12" ref="1">
    <original>K</original>
    <variation>E</variation>
    <location>
        <position position="879"/>
    </location>
</feature>
<feature type="sequence conflict" description="In Ref. 1; AAL78289." evidence="12" ref="1">
    <original>MDNP</original>
    <variation>VDNL</variation>
    <location>
        <begin position="887"/>
        <end position="890"/>
    </location>
</feature>
<feature type="sequence conflict" description="In Ref. 1; AAL78289." evidence="12" ref="1">
    <original>D</original>
    <variation>E</variation>
    <location>
        <position position="897"/>
    </location>
</feature>
<feature type="sequence conflict" description="In Ref. 1; AAL78289." evidence="12" ref="1">
    <original>LGSM</original>
    <variation>PGST</variation>
    <location>
        <begin position="905"/>
        <end position="908"/>
    </location>
</feature>
<feature type="sequence conflict" description="In Ref. 1; AAL78289." evidence="12" ref="1">
    <original>ERRCVQCQPGCYSSPS</original>
    <variation>GRRCERCQPGFYSSPG</variation>
    <location>
        <begin position="924"/>
        <end position="939"/>
    </location>
</feature>
<feature type="sequence conflict" description="In Ref. 1; AAL78289." evidence="12" ref="1">
    <original>LCHTVATKNC</original>
    <variation>SCHTAGAVSH</variation>
    <location>
        <begin position="948"/>
        <end position="957"/>
    </location>
</feature>
<feature type="sequence conflict" description="In Ref. 1; AAL78289." evidence="12" ref="1">
    <original>HCYCP</original>
    <variation>QCSCR</variation>
    <location>
        <begin position="965"/>
        <end position="969"/>
    </location>
</feature>
<feature type="sequence conflict" description="In Ref. 1; AAL78289." evidence="12" ref="1">
    <original>LSW</original>
    <variation>QSC</variation>
    <location>
        <begin position="976"/>
        <end position="978"/>
    </location>
</feature>
<feature type="sequence conflict" description="In Ref. 1; AAL78289." evidence="12" ref="1">
    <original>RYFRFDPLTGRCR</original>
    <variation>HYFGFDPRTGRCQ</variation>
    <location>
        <begin position="984"/>
        <end position="996"/>
    </location>
</feature>
<feature type="sequence conflict" description="In Ref. 1; AAL78289." evidence="12" ref="1">
    <original>VAGASNGTCDA</original>
    <variation>LEGALNETCDV</variation>
    <location>
        <begin position="1002"/>
        <end position="1012"/>
    </location>
</feature>
<feature type="sequence conflict" description="In Ref. 1; AAL78289." evidence="12" ref="1">
    <original>T</original>
    <variation>I</variation>
    <location>
        <position position="1030"/>
    </location>
</feature>
<feature type="sequence conflict" description="In Ref. 1; AAL78289." evidence="12" ref="1">
    <original>LA</original>
    <variation>FG</variation>
    <location>
        <begin position="1044"/>
        <end position="1045"/>
    </location>
</feature>
<feature type="sequence conflict" description="In Ref. 1; AAL78289." evidence="12" ref="1">
    <original>A</original>
    <variation>Y</variation>
    <location>
        <position position="1441"/>
    </location>
</feature>
<evidence type="ECO:0000250" key="1"/>
<evidence type="ECO:0000250" key="2">
    <source>
        <dbReference type="UniProtKB" id="O75445"/>
    </source>
</evidence>
<evidence type="ECO:0000250" key="3">
    <source>
        <dbReference type="UniProtKB" id="Q2QI47"/>
    </source>
</evidence>
<evidence type="ECO:0000255" key="4"/>
<evidence type="ECO:0000255" key="5">
    <source>
        <dbReference type="PROSITE-ProRule" id="PRU00122"/>
    </source>
</evidence>
<evidence type="ECO:0000255" key="6">
    <source>
        <dbReference type="PROSITE-ProRule" id="PRU00316"/>
    </source>
</evidence>
<evidence type="ECO:0000255" key="7">
    <source>
        <dbReference type="PROSITE-ProRule" id="PRU00460"/>
    </source>
</evidence>
<evidence type="ECO:0000255" key="8">
    <source>
        <dbReference type="PROSITE-ProRule" id="PRU00466"/>
    </source>
</evidence>
<evidence type="ECO:0000256" key="9">
    <source>
        <dbReference type="SAM" id="MobiDB-lite"/>
    </source>
</evidence>
<evidence type="ECO:0000269" key="10">
    <source>
    </source>
</evidence>
<evidence type="ECO:0000269" key="11">
    <source>
    </source>
</evidence>
<evidence type="ECO:0000305" key="12"/>
<organism>
    <name type="scientific">Rattus norvegicus</name>
    <name type="common">Rat</name>
    <dbReference type="NCBI Taxonomy" id="10116"/>
    <lineage>
        <taxon>Eukaryota</taxon>
        <taxon>Metazoa</taxon>
        <taxon>Chordata</taxon>
        <taxon>Craniata</taxon>
        <taxon>Vertebrata</taxon>
        <taxon>Euteleostomi</taxon>
        <taxon>Mammalia</taxon>
        <taxon>Eutheria</taxon>
        <taxon>Euarchontoglires</taxon>
        <taxon>Glires</taxon>
        <taxon>Rodentia</taxon>
        <taxon>Myomorpha</taxon>
        <taxon>Muroidea</taxon>
        <taxon>Muridae</taxon>
        <taxon>Murinae</taxon>
        <taxon>Rattus</taxon>
    </lineage>
</organism>
<dbReference type="EMBL" id="AY077844">
    <property type="protein sequence ID" value="AAL78289.1"/>
    <property type="molecule type" value="mRNA"/>
</dbReference>
<dbReference type="EMBL" id="AABR07022087">
    <property type="status" value="NOT_ANNOTATED_CDS"/>
    <property type="molecule type" value="Genomic_DNA"/>
</dbReference>
<dbReference type="EMBL" id="AABR07022096">
    <property type="status" value="NOT_ANNOTATED_CDS"/>
    <property type="molecule type" value="Genomic_DNA"/>
</dbReference>
<dbReference type="EMBL" id="AABR07022088">
    <property type="status" value="NOT_ANNOTATED_CDS"/>
    <property type="molecule type" value="Genomic_DNA"/>
</dbReference>
<dbReference type="EMBL" id="AABR07022089">
    <property type="status" value="NOT_ANNOTATED_CDS"/>
    <property type="molecule type" value="Genomic_DNA"/>
</dbReference>
<dbReference type="EMBL" id="AABR07022090">
    <property type="status" value="NOT_ANNOTATED_CDS"/>
    <property type="molecule type" value="Genomic_DNA"/>
</dbReference>
<dbReference type="EMBL" id="AABR07022091">
    <property type="status" value="NOT_ANNOTATED_CDS"/>
    <property type="molecule type" value="Genomic_DNA"/>
</dbReference>
<dbReference type="EMBL" id="AABR07022092">
    <property type="status" value="NOT_ANNOTATED_CDS"/>
    <property type="molecule type" value="Genomic_DNA"/>
</dbReference>
<dbReference type="EMBL" id="AABR07022094">
    <property type="status" value="NOT_ANNOTATED_CDS"/>
    <property type="molecule type" value="Genomic_DNA"/>
</dbReference>
<dbReference type="EMBL" id="AABR07022093">
    <property type="status" value="NOT_ANNOTATED_CDS"/>
    <property type="molecule type" value="Genomic_DNA"/>
</dbReference>
<dbReference type="EMBL" id="AABR07022095">
    <property type="status" value="NOT_ANNOTATED_CDS"/>
    <property type="molecule type" value="Genomic_DNA"/>
</dbReference>
<dbReference type="SMR" id="Q8K3K1"/>
<dbReference type="FunCoup" id="Q8K3K1">
    <property type="interactions" value="50"/>
</dbReference>
<dbReference type="IntAct" id="Q8K3K1">
    <property type="interactions" value="1"/>
</dbReference>
<dbReference type="STRING" id="10116.ENSRNOP00000004992"/>
<dbReference type="GlyCosmos" id="Q8K3K1">
    <property type="glycosylation" value="19 sites, No reported glycans"/>
</dbReference>
<dbReference type="GlyGen" id="Q8K3K1">
    <property type="glycosylation" value="21 sites"/>
</dbReference>
<dbReference type="PhosphoSitePlus" id="Q8K3K1"/>
<dbReference type="PaxDb" id="10116-ENSRNOP00000004992"/>
<dbReference type="UCSC" id="RGD:628777">
    <molecule id="Q8K3K1-2"/>
    <property type="organism name" value="rat"/>
</dbReference>
<dbReference type="AGR" id="RGD:628777"/>
<dbReference type="RGD" id="628777">
    <property type="gene designation" value="Ush2a"/>
</dbReference>
<dbReference type="eggNOG" id="KOG1836">
    <property type="taxonomic scope" value="Eukaryota"/>
</dbReference>
<dbReference type="HOGENOM" id="CLU_000067_0_0_1"/>
<dbReference type="InParanoid" id="Q8K3K1"/>
<dbReference type="PhylomeDB" id="Q8K3K1"/>
<dbReference type="PRO" id="PR:Q8K3K1"/>
<dbReference type="Proteomes" id="UP000002494">
    <property type="component" value="Unplaced"/>
</dbReference>
<dbReference type="GO" id="GO:0016324">
    <property type="term" value="C:apical plasma membrane"/>
    <property type="evidence" value="ECO:0000266"/>
    <property type="project" value="RGD"/>
</dbReference>
<dbReference type="GO" id="GO:0005604">
    <property type="term" value="C:basement membrane"/>
    <property type="evidence" value="ECO:0000266"/>
    <property type="project" value="RGD"/>
</dbReference>
<dbReference type="GO" id="GO:0036064">
    <property type="term" value="C:ciliary basal body"/>
    <property type="evidence" value="ECO:0000266"/>
    <property type="project" value="RGD"/>
</dbReference>
<dbReference type="GO" id="GO:0005737">
    <property type="term" value="C:cytoplasm"/>
    <property type="evidence" value="ECO:0000266"/>
    <property type="project" value="RGD"/>
</dbReference>
<dbReference type="GO" id="GO:0005576">
    <property type="term" value="C:extracellular region"/>
    <property type="evidence" value="ECO:0007669"/>
    <property type="project" value="UniProtKB-SubCell"/>
</dbReference>
<dbReference type="GO" id="GO:0043025">
    <property type="term" value="C:neuronal cell body"/>
    <property type="evidence" value="ECO:0000314"/>
    <property type="project" value="RGD"/>
</dbReference>
<dbReference type="GO" id="GO:1990075">
    <property type="term" value="C:periciliary membrane compartment"/>
    <property type="evidence" value="ECO:0000250"/>
    <property type="project" value="UniProtKB"/>
</dbReference>
<dbReference type="GO" id="GO:0032391">
    <property type="term" value="C:photoreceptor connecting cilium"/>
    <property type="evidence" value="ECO:0000314"/>
    <property type="project" value="RGD"/>
</dbReference>
<dbReference type="GO" id="GO:0001917">
    <property type="term" value="C:photoreceptor inner segment"/>
    <property type="evidence" value="ECO:0000314"/>
    <property type="project" value="RGD"/>
</dbReference>
<dbReference type="GO" id="GO:0002141">
    <property type="term" value="C:stereocilia ankle link"/>
    <property type="evidence" value="ECO:0000250"/>
    <property type="project" value="UniProtKB"/>
</dbReference>
<dbReference type="GO" id="GO:0002142">
    <property type="term" value="C:stereocilia ankle link complex"/>
    <property type="evidence" value="ECO:0000250"/>
    <property type="project" value="UniProtKB"/>
</dbReference>
<dbReference type="GO" id="GO:0032420">
    <property type="term" value="C:stereocilium"/>
    <property type="evidence" value="ECO:0000314"/>
    <property type="project" value="RGD"/>
</dbReference>
<dbReference type="GO" id="GO:0032421">
    <property type="term" value="C:stereocilium bundle"/>
    <property type="evidence" value="ECO:0000266"/>
    <property type="project" value="RGD"/>
</dbReference>
<dbReference type="GO" id="GO:0060171">
    <property type="term" value="C:stereocilium membrane"/>
    <property type="evidence" value="ECO:0000266"/>
    <property type="project" value="RGD"/>
</dbReference>
<dbReference type="GO" id="GO:0043195">
    <property type="term" value="C:terminal bouton"/>
    <property type="evidence" value="ECO:0000314"/>
    <property type="project" value="RGD"/>
</dbReference>
<dbReference type="GO" id="GO:1990696">
    <property type="term" value="C:USH2 complex"/>
    <property type="evidence" value="ECO:0000250"/>
    <property type="project" value="UniProtKB"/>
</dbReference>
<dbReference type="GO" id="GO:0005518">
    <property type="term" value="F:collagen binding"/>
    <property type="evidence" value="ECO:0000266"/>
    <property type="project" value="RGD"/>
</dbReference>
<dbReference type="GO" id="GO:0042802">
    <property type="term" value="F:identical protein binding"/>
    <property type="evidence" value="ECO:0000266"/>
    <property type="project" value="RGD"/>
</dbReference>
<dbReference type="GO" id="GO:0017022">
    <property type="term" value="F:myosin binding"/>
    <property type="evidence" value="ECO:0000266"/>
    <property type="project" value="RGD"/>
</dbReference>
<dbReference type="GO" id="GO:0009887">
    <property type="term" value="P:animal organ morphogenesis"/>
    <property type="evidence" value="ECO:0000318"/>
    <property type="project" value="GO_Central"/>
</dbReference>
<dbReference type="GO" id="GO:0051649">
    <property type="term" value="P:establishment of localization in cell"/>
    <property type="evidence" value="ECO:0000266"/>
    <property type="project" value="RGD"/>
</dbReference>
<dbReference type="GO" id="GO:0045184">
    <property type="term" value="P:establishment of protein localization"/>
    <property type="evidence" value="ECO:0000250"/>
    <property type="project" value="UniProtKB"/>
</dbReference>
<dbReference type="GO" id="GO:0035315">
    <property type="term" value="P:hair cell differentiation"/>
    <property type="evidence" value="ECO:0000266"/>
    <property type="project" value="RGD"/>
</dbReference>
<dbReference type="GO" id="GO:0042491">
    <property type="term" value="P:inner ear auditory receptor cell differentiation"/>
    <property type="evidence" value="ECO:0000266"/>
    <property type="project" value="RGD"/>
</dbReference>
<dbReference type="GO" id="GO:0048496">
    <property type="term" value="P:maintenance of animal organ identity"/>
    <property type="evidence" value="ECO:0000266"/>
    <property type="project" value="RGD"/>
</dbReference>
<dbReference type="GO" id="GO:0045494">
    <property type="term" value="P:photoreceptor cell maintenance"/>
    <property type="evidence" value="ECO:0000266"/>
    <property type="project" value="RGD"/>
</dbReference>
<dbReference type="GO" id="GO:0060041">
    <property type="term" value="P:retina development in camera-type eye"/>
    <property type="evidence" value="ECO:0000270"/>
    <property type="project" value="RGD"/>
</dbReference>
<dbReference type="GO" id="GO:0050953">
    <property type="term" value="P:sensory perception of light stimulus"/>
    <property type="evidence" value="ECO:0000266"/>
    <property type="project" value="RGD"/>
</dbReference>
<dbReference type="GO" id="GO:0007605">
    <property type="term" value="P:sensory perception of sound"/>
    <property type="evidence" value="ECO:0000266"/>
    <property type="project" value="RGD"/>
</dbReference>
<dbReference type="GO" id="GO:0009888">
    <property type="term" value="P:tissue development"/>
    <property type="evidence" value="ECO:0000318"/>
    <property type="project" value="GO_Central"/>
</dbReference>
<dbReference type="GO" id="GO:0007601">
    <property type="term" value="P:visual perception"/>
    <property type="evidence" value="ECO:0007669"/>
    <property type="project" value="UniProtKB-KW"/>
</dbReference>
<dbReference type="CDD" id="cd00055">
    <property type="entry name" value="EGF_Lam"/>
    <property type="match status" value="10"/>
</dbReference>
<dbReference type="CDD" id="cd00063">
    <property type="entry name" value="FN3"/>
    <property type="match status" value="30"/>
</dbReference>
<dbReference type="CDD" id="cd00110">
    <property type="entry name" value="LamG"/>
    <property type="match status" value="2"/>
</dbReference>
<dbReference type="FunFam" id="2.60.40.10:FF:003858">
    <property type="match status" value="1"/>
</dbReference>
<dbReference type="FunFam" id="2.10.25.10:FF:000090">
    <property type="entry name" value="laminin subunit alpha"/>
    <property type="match status" value="2"/>
</dbReference>
<dbReference type="FunFam" id="2.10.25.10:FF:000094">
    <property type="entry name" value="Laminin subunit alpha-2"/>
    <property type="match status" value="1"/>
</dbReference>
<dbReference type="FunFam" id="2.60.40.10:FF:002683">
    <property type="entry name" value="Predicted protein"/>
    <property type="match status" value="1"/>
</dbReference>
<dbReference type="FunFam" id="2.10.25.10:FF:000224">
    <property type="entry name" value="Usherin"/>
    <property type="match status" value="1"/>
</dbReference>
<dbReference type="FunFam" id="2.10.25.10:FF:000313">
    <property type="entry name" value="Usherin"/>
    <property type="match status" value="1"/>
</dbReference>
<dbReference type="FunFam" id="2.60.120.200:FF:000111">
    <property type="entry name" value="Usherin"/>
    <property type="match status" value="1"/>
</dbReference>
<dbReference type="FunFam" id="2.60.40.10:FF:000819">
    <property type="entry name" value="Usherin"/>
    <property type="match status" value="1"/>
</dbReference>
<dbReference type="FunFam" id="2.60.40.10:FF:000915">
    <property type="entry name" value="Usherin"/>
    <property type="match status" value="1"/>
</dbReference>
<dbReference type="FunFam" id="2.60.40.10:FF:000991">
    <property type="entry name" value="Usherin"/>
    <property type="match status" value="1"/>
</dbReference>
<dbReference type="FunFam" id="2.60.40.10:FF:001004">
    <property type="entry name" value="Usherin"/>
    <property type="match status" value="1"/>
</dbReference>
<dbReference type="FunFam" id="2.60.40.10:FF:001030">
    <property type="entry name" value="Usherin"/>
    <property type="match status" value="1"/>
</dbReference>
<dbReference type="FunFam" id="2.60.40.10:FF:001037">
    <property type="entry name" value="Usherin"/>
    <property type="match status" value="1"/>
</dbReference>
<dbReference type="FunFam" id="2.60.40.10:FF:001052">
    <property type="entry name" value="Usherin"/>
    <property type="match status" value="1"/>
</dbReference>
<dbReference type="FunFam" id="2.60.40.10:FF:001085">
    <property type="entry name" value="Usherin"/>
    <property type="match status" value="1"/>
</dbReference>
<dbReference type="FunFam" id="2.60.40.10:FF:001099">
    <property type="entry name" value="Usherin"/>
    <property type="match status" value="1"/>
</dbReference>
<dbReference type="FunFam" id="2.60.40.10:FF:001100">
    <property type="entry name" value="Usherin"/>
    <property type="match status" value="1"/>
</dbReference>
<dbReference type="FunFam" id="2.60.40.10:FF:001161">
    <property type="entry name" value="Usherin"/>
    <property type="match status" value="1"/>
</dbReference>
<dbReference type="FunFam" id="2.60.40.10:FF:001168">
    <property type="entry name" value="Usherin"/>
    <property type="match status" value="1"/>
</dbReference>
<dbReference type="FunFam" id="2.60.40.10:FF:001173">
    <property type="entry name" value="Usherin"/>
    <property type="match status" value="1"/>
</dbReference>
<dbReference type="FunFam" id="2.60.40.10:FF:001176">
    <property type="entry name" value="Usherin"/>
    <property type="match status" value="1"/>
</dbReference>
<dbReference type="FunFam" id="2.60.40.10:FF:001211">
    <property type="entry name" value="Usherin"/>
    <property type="match status" value="1"/>
</dbReference>
<dbReference type="FunFam" id="2.60.40.10:FF:001227">
    <property type="entry name" value="Usherin"/>
    <property type="match status" value="1"/>
</dbReference>
<dbReference type="FunFam" id="2.60.40.10:FF:001285">
    <property type="entry name" value="Usherin"/>
    <property type="match status" value="1"/>
</dbReference>
<dbReference type="FunFam" id="2.60.40.10:FF:001296">
    <property type="entry name" value="Usherin"/>
    <property type="match status" value="1"/>
</dbReference>
<dbReference type="FunFam" id="2.60.40.10:FF:001379">
    <property type="entry name" value="Usherin"/>
    <property type="match status" value="1"/>
</dbReference>
<dbReference type="FunFam" id="2.60.40.10:FF:001390">
    <property type="entry name" value="Usherin"/>
    <property type="match status" value="1"/>
</dbReference>
<dbReference type="FunFam" id="2.60.40.10:FF:001416">
    <property type="entry name" value="Usherin"/>
    <property type="match status" value="1"/>
</dbReference>
<dbReference type="FunFam" id="2.60.40.10:FF:001716">
    <property type="entry name" value="Usherin"/>
    <property type="match status" value="1"/>
</dbReference>
<dbReference type="FunFam" id="2.60.40.10:FF:001882">
    <property type="entry name" value="Usherin"/>
    <property type="match status" value="1"/>
</dbReference>
<dbReference type="FunFam" id="2.60.40.10:FF:001945">
    <property type="entry name" value="Usherin"/>
    <property type="match status" value="1"/>
</dbReference>
<dbReference type="FunFam" id="2.10.25.10:FF:000275">
    <property type="entry name" value="usherin"/>
    <property type="match status" value="1"/>
</dbReference>
<dbReference type="FunFam" id="2.10.25.10:FF:000376">
    <property type="entry name" value="usherin"/>
    <property type="match status" value="1"/>
</dbReference>
<dbReference type="FunFam" id="2.60.120.200:FF:000126">
    <property type="entry name" value="usherin"/>
    <property type="match status" value="1"/>
</dbReference>
<dbReference type="FunFam" id="2.60.40.10:FF:001023">
    <property type="entry name" value="usherin"/>
    <property type="match status" value="1"/>
</dbReference>
<dbReference type="FunFam" id="2.60.40.10:FF:001255">
    <property type="entry name" value="usherin"/>
    <property type="match status" value="1"/>
</dbReference>
<dbReference type="Gene3D" id="2.60.120.200">
    <property type="match status" value="3"/>
</dbReference>
<dbReference type="Gene3D" id="2.60.120.260">
    <property type="entry name" value="Galactose-binding domain-like"/>
    <property type="match status" value="1"/>
</dbReference>
<dbReference type="Gene3D" id="2.60.40.10">
    <property type="entry name" value="Immunoglobulins"/>
    <property type="match status" value="33"/>
</dbReference>
<dbReference type="Gene3D" id="2.10.25.10">
    <property type="entry name" value="Laminin"/>
    <property type="match status" value="7"/>
</dbReference>
<dbReference type="Gene3D" id="2.170.300.10">
    <property type="entry name" value="Tie2 ligand-binding domain superfamily"/>
    <property type="match status" value="1"/>
</dbReference>
<dbReference type="InterPro" id="IPR013320">
    <property type="entry name" value="ConA-like_dom_sf"/>
</dbReference>
<dbReference type="InterPro" id="IPR003961">
    <property type="entry name" value="FN3_dom"/>
</dbReference>
<dbReference type="InterPro" id="IPR036116">
    <property type="entry name" value="FN3_sf"/>
</dbReference>
<dbReference type="InterPro" id="IPR013783">
    <property type="entry name" value="Ig-like_fold"/>
</dbReference>
<dbReference type="InterPro" id="IPR006558">
    <property type="entry name" value="LamG-like"/>
</dbReference>
<dbReference type="InterPro" id="IPR001791">
    <property type="entry name" value="Laminin_G"/>
</dbReference>
<dbReference type="InterPro" id="IPR008211">
    <property type="entry name" value="Laminin_N"/>
</dbReference>
<dbReference type="InterPro" id="IPR002049">
    <property type="entry name" value="LE_dom"/>
</dbReference>
<dbReference type="InterPro" id="IPR050713">
    <property type="entry name" value="RTP_Phos/Ushers"/>
</dbReference>
<dbReference type="PANTHER" id="PTHR46957">
    <property type="entry name" value="CYTOKINE RECEPTOR"/>
    <property type="match status" value="1"/>
</dbReference>
<dbReference type="PANTHER" id="PTHR46957:SF7">
    <property type="entry name" value="USHERIN"/>
    <property type="match status" value="1"/>
</dbReference>
<dbReference type="Pfam" id="PF00053">
    <property type="entry name" value="EGF_laminin"/>
    <property type="match status" value="9"/>
</dbReference>
<dbReference type="Pfam" id="PF00041">
    <property type="entry name" value="fn3"/>
    <property type="match status" value="16"/>
</dbReference>
<dbReference type="Pfam" id="PF02210">
    <property type="entry name" value="Laminin_G_2"/>
    <property type="match status" value="2"/>
</dbReference>
<dbReference type="Pfam" id="PF13385">
    <property type="entry name" value="Laminin_G_3"/>
    <property type="match status" value="1"/>
</dbReference>
<dbReference type="Pfam" id="PF00055">
    <property type="entry name" value="Laminin_N"/>
    <property type="match status" value="1"/>
</dbReference>
<dbReference type="PRINTS" id="PR00011">
    <property type="entry name" value="EGFLAMININ"/>
</dbReference>
<dbReference type="SMART" id="SM00180">
    <property type="entry name" value="EGF_Lam"/>
    <property type="match status" value="10"/>
</dbReference>
<dbReference type="SMART" id="SM00060">
    <property type="entry name" value="FN3"/>
    <property type="match status" value="34"/>
</dbReference>
<dbReference type="SMART" id="SM00282">
    <property type="entry name" value="LamG"/>
    <property type="match status" value="2"/>
</dbReference>
<dbReference type="SMART" id="SM00560">
    <property type="entry name" value="LamGL"/>
    <property type="match status" value="1"/>
</dbReference>
<dbReference type="SMART" id="SM00136">
    <property type="entry name" value="LamNT"/>
    <property type="match status" value="1"/>
</dbReference>
<dbReference type="SUPFAM" id="SSF49899">
    <property type="entry name" value="Concanavalin A-like lectins/glucanases"/>
    <property type="match status" value="3"/>
</dbReference>
<dbReference type="SUPFAM" id="SSF57196">
    <property type="entry name" value="EGF/Laminin"/>
    <property type="match status" value="6"/>
</dbReference>
<dbReference type="SUPFAM" id="SSF49265">
    <property type="entry name" value="Fibronectin type III"/>
    <property type="match status" value="21"/>
</dbReference>
<dbReference type="PROSITE" id="PS00022">
    <property type="entry name" value="EGF_1"/>
    <property type="match status" value="6"/>
</dbReference>
<dbReference type="PROSITE" id="PS01248">
    <property type="entry name" value="EGF_LAM_1"/>
    <property type="match status" value="6"/>
</dbReference>
<dbReference type="PROSITE" id="PS50027">
    <property type="entry name" value="EGF_LAM_2"/>
    <property type="match status" value="10"/>
</dbReference>
<dbReference type="PROSITE" id="PS50853">
    <property type="entry name" value="FN3"/>
    <property type="match status" value="33"/>
</dbReference>
<dbReference type="PROSITE" id="PS50025">
    <property type="entry name" value="LAM_G_DOMAIN"/>
    <property type="match status" value="2"/>
</dbReference>
<dbReference type="PROSITE" id="PS51117">
    <property type="entry name" value="LAMININ_NTER"/>
    <property type="match status" value="1"/>
</dbReference>
<proteinExistence type="evidence at protein level"/>
<protein>
    <recommendedName>
        <fullName>Usherin</fullName>
    </recommendedName>
    <alternativeName>
        <fullName>Usher syndrome type IIa protein homolog</fullName>
    </alternativeName>
    <alternativeName>
        <fullName>Usher syndrome type-2A protein homolog</fullName>
    </alternativeName>
</protein>